<dbReference type="EC" id="3.2.1.35"/>
<dbReference type="EMBL" id="AF411973">
    <property type="protein sequence ID" value="AAL78385.1"/>
    <property type="molecule type" value="mRNA"/>
</dbReference>
<dbReference type="EMBL" id="BT021810">
    <property type="protein sequence ID" value="AAX46657.1"/>
    <property type="molecule type" value="mRNA"/>
</dbReference>
<dbReference type="EMBL" id="BT026155">
    <property type="protein sequence ID" value="ABG66994.1"/>
    <property type="molecule type" value="mRNA"/>
</dbReference>
<dbReference type="EMBL" id="BC102042">
    <property type="protein sequence ID" value="AAI02043.1"/>
    <property type="molecule type" value="mRNA"/>
</dbReference>
<dbReference type="RefSeq" id="NP_776772.1">
    <property type="nucleotide sequence ID" value="NM_174347.2"/>
</dbReference>
<dbReference type="RefSeq" id="XP_010815967.1">
    <property type="nucleotide sequence ID" value="XM_010817665.4"/>
</dbReference>
<dbReference type="RefSeq" id="XP_010815968.1">
    <property type="nucleotide sequence ID" value="XM_010817666.4"/>
</dbReference>
<dbReference type="RefSeq" id="XP_024838158.1">
    <property type="nucleotide sequence ID" value="XM_024982390.2"/>
</dbReference>
<dbReference type="SMR" id="Q8SQG8"/>
<dbReference type="FunCoup" id="Q8SQG8">
    <property type="interactions" value="900"/>
</dbReference>
<dbReference type="STRING" id="9913.ENSBTAP00000000612"/>
<dbReference type="BindingDB" id="Q8SQG8"/>
<dbReference type="ChEMBL" id="CHEMBL3833905"/>
<dbReference type="CAZy" id="GH56">
    <property type="family name" value="Glycoside Hydrolase Family 56"/>
</dbReference>
<dbReference type="GlyCosmos" id="Q8SQG8">
    <property type="glycosylation" value="4 sites, No reported glycans"/>
</dbReference>
<dbReference type="GlyGen" id="Q8SQG8">
    <property type="glycosylation" value="4 sites"/>
</dbReference>
<dbReference type="PaxDb" id="9913-ENSBTAP00000000612"/>
<dbReference type="Ensembl" id="ENSBTAT00000052079.4">
    <property type="protein sequence ID" value="ENSBTAP00000051198.2"/>
    <property type="gene ID" value="ENSBTAG00000000484.6"/>
</dbReference>
<dbReference type="GeneID" id="281838"/>
<dbReference type="KEGG" id="bta:281838"/>
<dbReference type="CTD" id="8692"/>
<dbReference type="VEuPathDB" id="HostDB:ENSBTAG00000000484"/>
<dbReference type="VGNC" id="VGNC:30011">
    <property type="gene designation" value="HYAL2"/>
</dbReference>
<dbReference type="eggNOG" id="ENOG502QUYI">
    <property type="taxonomic scope" value="Eukaryota"/>
</dbReference>
<dbReference type="GeneTree" id="ENSGT01020000230364"/>
<dbReference type="HOGENOM" id="CLU_036366_0_0_1"/>
<dbReference type="InParanoid" id="Q8SQG8"/>
<dbReference type="OMA" id="TKNRESC"/>
<dbReference type="OrthoDB" id="5796153at2759"/>
<dbReference type="TreeFam" id="TF321598"/>
<dbReference type="Reactome" id="R-BTA-2160916">
    <property type="pathway name" value="Hyaluronan uptake and degradation"/>
</dbReference>
<dbReference type="Proteomes" id="UP000009136">
    <property type="component" value="Chromosome 22"/>
</dbReference>
<dbReference type="Bgee" id="ENSBTAG00000000484">
    <property type="expression patterns" value="Expressed in bone marrow and 106 other cell types or tissues"/>
</dbReference>
<dbReference type="GO" id="GO:0016324">
    <property type="term" value="C:apical plasma membrane"/>
    <property type="evidence" value="ECO:0000250"/>
    <property type="project" value="UniProtKB"/>
</dbReference>
<dbReference type="GO" id="GO:0031410">
    <property type="term" value="C:cytoplasmic vesicle"/>
    <property type="evidence" value="ECO:0000250"/>
    <property type="project" value="UniProtKB"/>
</dbReference>
<dbReference type="GO" id="GO:0005829">
    <property type="term" value="C:cytosol"/>
    <property type="evidence" value="ECO:0000250"/>
    <property type="project" value="UniProtKB"/>
</dbReference>
<dbReference type="GO" id="GO:0030139">
    <property type="term" value="C:endocytic vesicle"/>
    <property type="evidence" value="ECO:0000250"/>
    <property type="project" value="UniProtKB"/>
</dbReference>
<dbReference type="GO" id="GO:0005764">
    <property type="term" value="C:lysosome"/>
    <property type="evidence" value="ECO:0000250"/>
    <property type="project" value="UniProtKB"/>
</dbReference>
<dbReference type="GO" id="GO:0045121">
    <property type="term" value="C:membrane raft"/>
    <property type="evidence" value="ECO:0000250"/>
    <property type="project" value="UniProtKB"/>
</dbReference>
<dbReference type="GO" id="GO:0005902">
    <property type="term" value="C:microvillus"/>
    <property type="evidence" value="ECO:0000250"/>
    <property type="project" value="UniProtKB"/>
</dbReference>
<dbReference type="GO" id="GO:0048471">
    <property type="term" value="C:perinuclear region of cytoplasm"/>
    <property type="evidence" value="ECO:0000250"/>
    <property type="project" value="UniProtKB"/>
</dbReference>
<dbReference type="GO" id="GO:0005886">
    <property type="term" value="C:plasma membrane"/>
    <property type="evidence" value="ECO:0000250"/>
    <property type="project" value="UniProtKB"/>
</dbReference>
<dbReference type="GO" id="GO:0098552">
    <property type="term" value="C:side of membrane"/>
    <property type="evidence" value="ECO:0007669"/>
    <property type="project" value="UniProtKB-KW"/>
</dbReference>
<dbReference type="GO" id="GO:0005540">
    <property type="term" value="F:hyaluronic acid binding"/>
    <property type="evidence" value="ECO:0000250"/>
    <property type="project" value="UniProtKB"/>
</dbReference>
<dbReference type="GO" id="GO:0033906">
    <property type="term" value="F:hyaluronoglucuronidase activity"/>
    <property type="evidence" value="ECO:0000250"/>
    <property type="project" value="UniProtKB"/>
</dbReference>
<dbReference type="GO" id="GO:0004415">
    <property type="term" value="F:hyalurononglucosaminidase activity"/>
    <property type="evidence" value="ECO:0000250"/>
    <property type="project" value="UniProtKB"/>
</dbReference>
<dbReference type="GO" id="GO:0030294">
    <property type="term" value="F:receptor signaling protein tyrosine kinase inhibitor activity"/>
    <property type="evidence" value="ECO:0000250"/>
    <property type="project" value="UniProtKB"/>
</dbReference>
<dbReference type="GO" id="GO:0001618">
    <property type="term" value="F:virus receptor activity"/>
    <property type="evidence" value="ECO:0000250"/>
    <property type="project" value="UniProtKB"/>
</dbReference>
<dbReference type="GO" id="GO:0005975">
    <property type="term" value="P:carbohydrate metabolic process"/>
    <property type="evidence" value="ECO:0007669"/>
    <property type="project" value="InterPro"/>
</dbReference>
<dbReference type="GO" id="GO:0051216">
    <property type="term" value="P:cartilage development"/>
    <property type="evidence" value="ECO:0000250"/>
    <property type="project" value="UniProtKB"/>
</dbReference>
<dbReference type="GO" id="GO:0044344">
    <property type="term" value="P:cellular response to fibroblast growth factor stimulus"/>
    <property type="evidence" value="ECO:0000250"/>
    <property type="project" value="UniProtKB"/>
</dbReference>
<dbReference type="GO" id="GO:0071347">
    <property type="term" value="P:cellular response to interleukin-1"/>
    <property type="evidence" value="ECO:0000250"/>
    <property type="project" value="UniProtKB"/>
</dbReference>
<dbReference type="GO" id="GO:0071560">
    <property type="term" value="P:cellular response to transforming growth factor beta stimulus"/>
    <property type="evidence" value="ECO:0000250"/>
    <property type="project" value="UniProtKB"/>
</dbReference>
<dbReference type="GO" id="GO:0071493">
    <property type="term" value="P:cellular response to UV-B"/>
    <property type="evidence" value="ECO:0000250"/>
    <property type="project" value="UniProtKB"/>
</dbReference>
<dbReference type="GO" id="GO:0006027">
    <property type="term" value="P:glycosaminoglycan catabolic process"/>
    <property type="evidence" value="ECO:0000250"/>
    <property type="project" value="UniProtKB"/>
</dbReference>
<dbReference type="GO" id="GO:0030214">
    <property type="term" value="P:hyaluronan catabolic process"/>
    <property type="evidence" value="ECO:0000250"/>
    <property type="project" value="UniProtKB"/>
</dbReference>
<dbReference type="GO" id="GO:0042117">
    <property type="term" value="P:monocyte activation"/>
    <property type="evidence" value="ECO:0000250"/>
    <property type="project" value="UniProtKB"/>
</dbReference>
<dbReference type="GO" id="GO:0030308">
    <property type="term" value="P:negative regulation of cell growth"/>
    <property type="evidence" value="ECO:0000250"/>
    <property type="project" value="UniProtKB"/>
</dbReference>
<dbReference type="GO" id="GO:0010764">
    <property type="term" value="P:negative regulation of fibroblast migration"/>
    <property type="evidence" value="ECO:0000250"/>
    <property type="project" value="UniProtKB"/>
</dbReference>
<dbReference type="GO" id="GO:0051898">
    <property type="term" value="P:negative regulation of phosphatidylinositol 3-kinase/protein kinase B signal transduction"/>
    <property type="evidence" value="ECO:0000250"/>
    <property type="project" value="UniProtKB"/>
</dbReference>
<dbReference type="GO" id="GO:0050729">
    <property type="term" value="P:positive regulation of inflammatory response"/>
    <property type="evidence" value="ECO:0000250"/>
    <property type="project" value="UniProtKB"/>
</dbReference>
<dbReference type="GO" id="GO:0032755">
    <property type="term" value="P:positive regulation of interleukin-6 production"/>
    <property type="evidence" value="ECO:0000250"/>
    <property type="project" value="UniProtKB"/>
</dbReference>
<dbReference type="GO" id="GO:0032757">
    <property type="term" value="P:positive regulation of interleukin-8 production"/>
    <property type="evidence" value="ECO:0000250"/>
    <property type="project" value="UniProtKB"/>
</dbReference>
<dbReference type="GO" id="GO:0035810">
    <property type="term" value="P:positive regulation of urine volume"/>
    <property type="evidence" value="ECO:0000250"/>
    <property type="project" value="UniProtKB"/>
</dbReference>
<dbReference type="GO" id="GO:0070295">
    <property type="term" value="P:renal water absorption"/>
    <property type="evidence" value="ECO:0000250"/>
    <property type="project" value="UniProtKB"/>
</dbReference>
<dbReference type="GO" id="GO:0000302">
    <property type="term" value="P:response to reactive oxygen species"/>
    <property type="evidence" value="ECO:0000250"/>
    <property type="project" value="UniProtKB"/>
</dbReference>
<dbReference type="GO" id="GO:0009615">
    <property type="term" value="P:response to virus"/>
    <property type="evidence" value="ECO:0000250"/>
    <property type="project" value="UniProtKB"/>
</dbReference>
<dbReference type="GO" id="GO:0046718">
    <property type="term" value="P:symbiont entry into host cell"/>
    <property type="evidence" value="ECO:0000250"/>
    <property type="project" value="UniProtKB"/>
</dbReference>
<dbReference type="FunFam" id="3.20.20.70:FF:000065">
    <property type="entry name" value="Hyaluronidase"/>
    <property type="match status" value="1"/>
</dbReference>
<dbReference type="Gene3D" id="3.20.20.70">
    <property type="entry name" value="Aldolase class I"/>
    <property type="match status" value="1"/>
</dbReference>
<dbReference type="InterPro" id="IPR013785">
    <property type="entry name" value="Aldolase_TIM"/>
</dbReference>
<dbReference type="InterPro" id="IPR017853">
    <property type="entry name" value="Glycoside_hydrolase_SF"/>
</dbReference>
<dbReference type="InterPro" id="IPR018155">
    <property type="entry name" value="Hyaluronidase"/>
</dbReference>
<dbReference type="PANTHER" id="PTHR11769">
    <property type="entry name" value="HYALURONIDASE"/>
    <property type="match status" value="1"/>
</dbReference>
<dbReference type="PANTHER" id="PTHR11769:SF6">
    <property type="entry name" value="HYALURONIDASE-2"/>
    <property type="match status" value="1"/>
</dbReference>
<dbReference type="Pfam" id="PF01630">
    <property type="entry name" value="Glyco_hydro_56"/>
    <property type="match status" value="1"/>
</dbReference>
<dbReference type="PIRSF" id="PIRSF038193">
    <property type="entry name" value="Hyaluronidase"/>
    <property type="match status" value="1"/>
</dbReference>
<dbReference type="PRINTS" id="PR00846">
    <property type="entry name" value="GLHYDRLASE56"/>
</dbReference>
<dbReference type="SUPFAM" id="SSF51445">
    <property type="entry name" value="(Trans)glycosidases"/>
    <property type="match status" value="1"/>
</dbReference>
<dbReference type="PROSITE" id="PS00022">
    <property type="entry name" value="EGF_1"/>
    <property type="match status" value="1"/>
</dbReference>
<dbReference type="PROSITE" id="PS01186">
    <property type="entry name" value="EGF_2"/>
    <property type="match status" value="1"/>
</dbReference>
<evidence type="ECO:0000250" key="1"/>
<evidence type="ECO:0000250" key="2">
    <source>
        <dbReference type="UniProtKB" id="O35632"/>
    </source>
</evidence>
<evidence type="ECO:0000250" key="3">
    <source>
        <dbReference type="UniProtKB" id="Q12891"/>
    </source>
</evidence>
<evidence type="ECO:0000255" key="4"/>
<evidence type="ECO:0000305" key="5"/>
<accession>Q8SQG8</accession>
<proteinExistence type="evidence at transcript level"/>
<reference key="1">
    <citation type="journal article" date="2002" name="J. Virol.">
        <title>Mechanism of cell entry and transformation by enzootic nasal tumor virus.</title>
        <authorList>
            <person name="Dirks C."/>
            <person name="Duh F.-M."/>
            <person name="Rai S.K."/>
            <person name="Lerman M.I."/>
            <person name="Miller A.D."/>
        </authorList>
    </citation>
    <scope>NUCLEOTIDE SEQUENCE [MRNA]</scope>
</reference>
<reference key="2">
    <citation type="journal article" date="2005" name="BMC Genomics">
        <title>Characterization of 954 bovine full-CDS cDNA sequences.</title>
        <authorList>
            <person name="Harhay G.P."/>
            <person name="Sonstegard T.S."/>
            <person name="Keele J.W."/>
            <person name="Heaton M.P."/>
            <person name="Clawson M.L."/>
            <person name="Snelling W.M."/>
            <person name="Wiedmann R.T."/>
            <person name="Van Tassell C.P."/>
            <person name="Smith T.P.L."/>
        </authorList>
    </citation>
    <scope>NUCLEOTIDE SEQUENCE [LARGE SCALE MRNA]</scope>
</reference>
<reference key="3">
    <citation type="submission" date="2005-08" db="EMBL/GenBank/DDBJ databases">
        <authorList>
            <consortium name="NIH - Mammalian Gene Collection (MGC) project"/>
        </authorList>
    </citation>
    <scope>NUCLEOTIDE SEQUENCE [LARGE SCALE MRNA]</scope>
    <source>
        <strain>Crossbred X Angus</strain>
        <tissue>Ileum</tissue>
    </source>
</reference>
<comment type="function">
    <text evidence="2">Catalyzes hyaluronan degradation into small fragments that are endocytosed and degraded in lysosomes by HYAL1 and exoglycosidases. Essential for the breakdown of extracellular matrix hyaluronan.</text>
</comment>
<comment type="catalytic activity">
    <reaction>
        <text>Random hydrolysis of (1-&gt;4)-linkages between N-acetyl-beta-D-glucosamine and D-glucuronate residues in hyaluronate.</text>
        <dbReference type="EC" id="3.2.1.35"/>
    </reaction>
</comment>
<comment type="subunit">
    <text evidence="3">Interacts with MST1R.</text>
</comment>
<comment type="subcellular location">
    <subcellularLocation>
        <location evidence="3">Cell membrane</location>
        <topology evidence="3">Lipid-anchor</topology>
        <topology evidence="3">GPI-anchor</topology>
    </subcellularLocation>
</comment>
<comment type="similarity">
    <text evidence="5">Belongs to the glycosyl hydrolase 56 family.</text>
</comment>
<keyword id="KW-1003">Cell membrane</keyword>
<keyword id="KW-1015">Disulfide bond</keyword>
<keyword id="KW-0245">EGF-like domain</keyword>
<keyword id="KW-0325">Glycoprotein</keyword>
<keyword id="KW-0326">Glycosidase</keyword>
<keyword id="KW-0336">GPI-anchor</keyword>
<keyword id="KW-0378">Hydrolase</keyword>
<keyword id="KW-0449">Lipoprotein</keyword>
<keyword id="KW-0472">Membrane</keyword>
<keyword id="KW-0675">Receptor</keyword>
<keyword id="KW-1185">Reference proteome</keyword>
<keyword id="KW-0732">Signal</keyword>
<organism>
    <name type="scientific">Bos taurus</name>
    <name type="common">Bovine</name>
    <dbReference type="NCBI Taxonomy" id="9913"/>
    <lineage>
        <taxon>Eukaryota</taxon>
        <taxon>Metazoa</taxon>
        <taxon>Chordata</taxon>
        <taxon>Craniata</taxon>
        <taxon>Vertebrata</taxon>
        <taxon>Euteleostomi</taxon>
        <taxon>Mammalia</taxon>
        <taxon>Eutheria</taxon>
        <taxon>Laurasiatheria</taxon>
        <taxon>Artiodactyla</taxon>
        <taxon>Ruminantia</taxon>
        <taxon>Pecora</taxon>
        <taxon>Bovidae</taxon>
        <taxon>Bovinae</taxon>
        <taxon>Bos</taxon>
    </lineage>
</organism>
<sequence>MWTGLGPAVTLALVLVVAWATELKPTAPPIFTGRPFVVAWDVPTQDCGPRHKMPLDPKDMKAFDVQASPNEGFVNQNITIFYRDRLGMYPHFNSVGRSVHGGVPQNGSLWVHLEMLKGHVEHYIRTQEPAGLAVIDWEDWRPVWVRNWQDKDVYRRLSRHLVAIRHPDWPPERVAKEAQYEFEFAARQFMLETLRFVKAFRPRHLWGFYLFPDCYNHDYVQNWETYTGRCPDVEVSRNDQLAWLWAESTALFPSVYLEETLASSTHGRNFVSFRVQEALRVADVHHANHALPVYVFTRPTYSRGLTGLSEMDLISTIGESAALGAAGVILWGDAGFTTSNETCRRLKDYLTRSLVPYVVNVSWAAQYCSWAQCHGHGRCVRRDPNAHTFLHLSASSFRLVPSHAPDEPRLRPEGELSWADRNHLQMHFRCQCYLGWGGEQCQWDRRRAAGGASGAWAGSHLTGLLAVAVLAFT</sequence>
<gene>
    <name type="primary">HYAL2</name>
</gene>
<name>HYAL2_BOVIN</name>
<feature type="signal peptide" evidence="4">
    <location>
        <begin position="1"/>
        <end position="20"/>
    </location>
</feature>
<feature type="chain" id="PRO_0000296276" description="Hyaluronidase-2">
    <location>
        <begin position="21"/>
        <end position="451"/>
    </location>
</feature>
<feature type="propeptide" id="PRO_0000296277" description="Removed in mature form" evidence="4">
    <location>
        <begin position="452"/>
        <end position="473"/>
    </location>
</feature>
<feature type="domain" description="EGF-like">
    <location>
        <begin position="364"/>
        <end position="442"/>
    </location>
</feature>
<feature type="active site" description="Proton donor" evidence="1">
    <location>
        <position position="138"/>
    </location>
</feature>
<feature type="lipid moiety-binding region" description="GPI-anchor amidated glycine" evidence="4">
    <location>
        <position position="451"/>
    </location>
</feature>
<feature type="glycosylation site" description="N-linked (GlcNAc...) asparagine" evidence="4">
    <location>
        <position position="77"/>
    </location>
</feature>
<feature type="glycosylation site" description="N-linked (GlcNAc...) asparagine" evidence="4">
    <location>
        <position position="106"/>
    </location>
</feature>
<feature type="glycosylation site" description="N-linked (GlcNAc...) asparagine" evidence="4">
    <location>
        <position position="340"/>
    </location>
</feature>
<feature type="glycosylation site" description="N-linked (GlcNAc...) asparagine" evidence="4">
    <location>
        <position position="360"/>
    </location>
</feature>
<feature type="disulfide bond" evidence="1">
    <location>
        <begin position="47"/>
        <end position="343"/>
    </location>
</feature>
<feature type="disulfide bond" evidence="1">
    <location>
        <begin position="214"/>
        <end position="230"/>
    </location>
</feature>
<feature type="disulfide bond" evidence="1">
    <location>
        <begin position="368"/>
        <end position="379"/>
    </location>
</feature>
<feature type="disulfide bond" evidence="1">
    <location>
        <begin position="373"/>
        <end position="430"/>
    </location>
</feature>
<feature type="disulfide bond" evidence="1">
    <location>
        <begin position="432"/>
        <end position="441"/>
    </location>
</feature>
<protein>
    <recommendedName>
        <fullName>Hyaluronidase-2</fullName>
        <shortName>Hyal-2</shortName>
        <ecNumber>3.2.1.35</ecNumber>
    </recommendedName>
    <alternativeName>
        <fullName>Hyaluronoglucosaminidase-2</fullName>
    </alternativeName>
</protein>